<reference key="1">
    <citation type="journal article" date="2000" name="Nature">
        <title>Sequence and analysis of chromosome 5 of the plant Arabidopsis thaliana.</title>
        <authorList>
            <person name="Tabata S."/>
            <person name="Kaneko T."/>
            <person name="Nakamura Y."/>
            <person name="Kotani H."/>
            <person name="Kato T."/>
            <person name="Asamizu E."/>
            <person name="Miyajima N."/>
            <person name="Sasamoto S."/>
            <person name="Kimura T."/>
            <person name="Hosouchi T."/>
            <person name="Kawashima K."/>
            <person name="Kohara M."/>
            <person name="Matsumoto M."/>
            <person name="Matsuno A."/>
            <person name="Muraki A."/>
            <person name="Nakayama S."/>
            <person name="Nakazaki N."/>
            <person name="Naruo K."/>
            <person name="Okumura S."/>
            <person name="Shinpo S."/>
            <person name="Takeuchi C."/>
            <person name="Wada T."/>
            <person name="Watanabe A."/>
            <person name="Yamada M."/>
            <person name="Yasuda M."/>
            <person name="Sato S."/>
            <person name="de la Bastide M."/>
            <person name="Huang E."/>
            <person name="Spiegel L."/>
            <person name="Gnoj L."/>
            <person name="O'Shaughnessy A."/>
            <person name="Preston R."/>
            <person name="Habermann K."/>
            <person name="Murray J."/>
            <person name="Johnson D."/>
            <person name="Rohlfing T."/>
            <person name="Nelson J."/>
            <person name="Stoneking T."/>
            <person name="Pepin K."/>
            <person name="Spieth J."/>
            <person name="Sekhon M."/>
            <person name="Armstrong J."/>
            <person name="Becker M."/>
            <person name="Belter E."/>
            <person name="Cordum H."/>
            <person name="Cordes M."/>
            <person name="Courtney L."/>
            <person name="Courtney W."/>
            <person name="Dante M."/>
            <person name="Du H."/>
            <person name="Edwards J."/>
            <person name="Fryman J."/>
            <person name="Haakensen B."/>
            <person name="Lamar E."/>
            <person name="Latreille P."/>
            <person name="Leonard S."/>
            <person name="Meyer R."/>
            <person name="Mulvaney E."/>
            <person name="Ozersky P."/>
            <person name="Riley A."/>
            <person name="Strowmatt C."/>
            <person name="Wagner-McPherson C."/>
            <person name="Wollam A."/>
            <person name="Yoakum M."/>
            <person name="Bell M."/>
            <person name="Dedhia N."/>
            <person name="Parnell L."/>
            <person name="Shah R."/>
            <person name="Rodriguez M."/>
            <person name="Hoon See L."/>
            <person name="Vil D."/>
            <person name="Baker J."/>
            <person name="Kirchoff K."/>
            <person name="Toth K."/>
            <person name="King L."/>
            <person name="Bahret A."/>
            <person name="Miller B."/>
            <person name="Marra M.A."/>
            <person name="Martienssen R."/>
            <person name="McCombie W.R."/>
            <person name="Wilson R.K."/>
            <person name="Murphy G."/>
            <person name="Bancroft I."/>
            <person name="Volckaert G."/>
            <person name="Wambutt R."/>
            <person name="Duesterhoeft A."/>
            <person name="Stiekema W."/>
            <person name="Pohl T."/>
            <person name="Entian K.-D."/>
            <person name="Terryn N."/>
            <person name="Hartley N."/>
            <person name="Bent E."/>
            <person name="Johnson S."/>
            <person name="Langham S.-A."/>
            <person name="McCullagh B."/>
            <person name="Robben J."/>
            <person name="Grymonprez B."/>
            <person name="Zimmermann W."/>
            <person name="Ramsperger U."/>
            <person name="Wedler H."/>
            <person name="Balke K."/>
            <person name="Wedler E."/>
            <person name="Peters S."/>
            <person name="van Staveren M."/>
            <person name="Dirkse W."/>
            <person name="Mooijman P."/>
            <person name="Klein Lankhorst R."/>
            <person name="Weitzenegger T."/>
            <person name="Bothe G."/>
            <person name="Rose M."/>
            <person name="Hauf J."/>
            <person name="Berneiser S."/>
            <person name="Hempel S."/>
            <person name="Feldpausch M."/>
            <person name="Lamberth S."/>
            <person name="Villarroel R."/>
            <person name="Gielen J."/>
            <person name="Ardiles W."/>
            <person name="Bents O."/>
            <person name="Lemcke K."/>
            <person name="Kolesov G."/>
            <person name="Mayer K.F.X."/>
            <person name="Rudd S."/>
            <person name="Schoof H."/>
            <person name="Schueller C."/>
            <person name="Zaccaria P."/>
            <person name="Mewes H.-W."/>
            <person name="Bevan M."/>
            <person name="Fransz P.F."/>
        </authorList>
    </citation>
    <scope>NUCLEOTIDE SEQUENCE [LARGE SCALE GENOMIC DNA]</scope>
    <source>
        <strain>cv. Columbia</strain>
    </source>
</reference>
<reference key="2">
    <citation type="journal article" date="2017" name="Plant J.">
        <title>Araport11: a complete reannotation of the Arabidopsis thaliana reference genome.</title>
        <authorList>
            <person name="Cheng C.Y."/>
            <person name="Krishnakumar V."/>
            <person name="Chan A.P."/>
            <person name="Thibaud-Nissen F."/>
            <person name="Schobel S."/>
            <person name="Town C.D."/>
        </authorList>
    </citation>
    <scope>GENOME REANNOTATION</scope>
    <source>
        <strain>cv. Columbia</strain>
    </source>
</reference>
<reference key="3">
    <citation type="submission" date="2006-07" db="EMBL/GenBank/DDBJ databases">
        <title>Large-scale analysis of RIKEN Arabidopsis full-length (RAFL) cDNAs.</title>
        <authorList>
            <person name="Totoki Y."/>
            <person name="Seki M."/>
            <person name="Ishida J."/>
            <person name="Nakajima M."/>
            <person name="Enju A."/>
            <person name="Kamiya A."/>
            <person name="Narusaka M."/>
            <person name="Shin-i T."/>
            <person name="Nakagawa M."/>
            <person name="Sakamoto N."/>
            <person name="Oishi K."/>
            <person name="Kohara Y."/>
            <person name="Kobayashi M."/>
            <person name="Toyoda A."/>
            <person name="Sakaki Y."/>
            <person name="Sakurai T."/>
            <person name="Iida K."/>
            <person name="Akiyama K."/>
            <person name="Satou M."/>
            <person name="Toyoda T."/>
            <person name="Konagaya A."/>
            <person name="Carninci P."/>
            <person name="Kawai J."/>
            <person name="Hayashizaki Y."/>
            <person name="Shinozaki K."/>
        </authorList>
    </citation>
    <scope>NUCLEOTIDE SEQUENCE [LARGE SCALE MRNA] (ISOFORM 1)</scope>
    <source>
        <strain>cv. Columbia</strain>
    </source>
</reference>
<reference key="4">
    <citation type="submission" date="2006-12" db="EMBL/GenBank/DDBJ databases">
        <title>Arabidopsis ORF clones.</title>
        <authorList>
            <person name="Bautista V.R."/>
            <person name="Kim C.J."/>
            <person name="Chen H."/>
            <person name="Wu S.Y."/>
            <person name="De Los Reyes C."/>
            <person name="Ecker J.R."/>
        </authorList>
    </citation>
    <scope>NUCLEOTIDE SEQUENCE [LARGE SCALE MRNA] (ISOFORM 2)</scope>
    <source>
        <strain>cv. Columbia</strain>
    </source>
</reference>
<reference key="5">
    <citation type="journal article" date="2013" name="Curr. Biol.">
        <title>Centromeric cohesion is protected twice at meiosis, by SHUGOSHINs at anaphase I and by PATRONUS at interkinesis.</title>
        <authorList>
            <person name="Cromer L."/>
            <person name="Jolivet S."/>
            <person name="Horlow C."/>
            <person name="Chelysheva L."/>
            <person name="Heyman J."/>
            <person name="De Jaeger G."/>
            <person name="Koncz C."/>
            <person name="De Veylder L."/>
            <person name="Mercier R."/>
        </authorList>
    </citation>
    <scope>FUNCTION</scope>
</reference>
<reference key="6">
    <citation type="journal article" date="2013" name="Plant Reprod.">
        <title>SGO1 but not SGO2 is required for maintenance of centromere cohesion in Arabidopsis thaliana meiosis.</title>
        <authorList>
            <person name="Zamariola L."/>
            <person name="De Storme N."/>
            <person name="Tiang C.L."/>
            <person name="Armstrong S.J."/>
            <person name="Franklin F.C."/>
            <person name="Geelen D."/>
        </authorList>
    </citation>
    <scope>FUNCTION</scope>
</reference>
<reference key="7">
    <citation type="journal article" date="2014" name="Plant J.">
        <title>SHUGOSHINs and PATRONUS protect meiotic centromere cohesion in Arabidopsis thaliana.</title>
        <authorList>
            <person name="Zamariola L."/>
            <person name="De Storme N."/>
            <person name="Vannerum K."/>
            <person name="Vandepoele K."/>
            <person name="Armstrong S.J."/>
            <person name="Franklin F.C."/>
            <person name="Geelen D."/>
        </authorList>
    </citation>
    <scope>FUNCTION</scope>
</reference>
<organism>
    <name type="scientific">Arabidopsis thaliana</name>
    <name type="common">Mouse-ear cress</name>
    <dbReference type="NCBI Taxonomy" id="3702"/>
    <lineage>
        <taxon>Eukaryota</taxon>
        <taxon>Viridiplantae</taxon>
        <taxon>Streptophyta</taxon>
        <taxon>Embryophyta</taxon>
        <taxon>Tracheophyta</taxon>
        <taxon>Spermatophyta</taxon>
        <taxon>Magnoliopsida</taxon>
        <taxon>eudicotyledons</taxon>
        <taxon>Gunneridae</taxon>
        <taxon>Pentapetalae</taxon>
        <taxon>rosids</taxon>
        <taxon>malvids</taxon>
        <taxon>Brassicales</taxon>
        <taxon>Brassicaceae</taxon>
        <taxon>Camelineae</taxon>
        <taxon>Arabidopsis</taxon>
    </lineage>
</organism>
<feature type="chain" id="PRO_0000438547" description="SHUGOSHIN 2">
    <location>
        <begin position="1"/>
        <end position="470"/>
    </location>
</feature>
<feature type="region of interest" description="Disordered" evidence="2">
    <location>
        <begin position="131"/>
        <end position="176"/>
    </location>
</feature>
<feature type="region of interest" description="Disordered" evidence="2">
    <location>
        <begin position="358"/>
        <end position="470"/>
    </location>
</feature>
<feature type="coiled-coil region" evidence="1">
    <location>
        <begin position="72"/>
        <end position="113"/>
    </location>
</feature>
<feature type="compositionally biased region" description="Basic and acidic residues" evidence="2">
    <location>
        <begin position="131"/>
        <end position="143"/>
    </location>
</feature>
<feature type="compositionally biased region" description="Basic and acidic residues" evidence="2">
    <location>
        <begin position="150"/>
        <end position="162"/>
    </location>
</feature>
<feature type="compositionally biased region" description="Basic residues" evidence="2">
    <location>
        <begin position="163"/>
        <end position="172"/>
    </location>
</feature>
<feature type="compositionally biased region" description="Basic and acidic residues" evidence="2">
    <location>
        <begin position="370"/>
        <end position="381"/>
    </location>
</feature>
<feature type="compositionally biased region" description="Basic residues" evidence="2">
    <location>
        <begin position="382"/>
        <end position="392"/>
    </location>
</feature>
<feature type="compositionally biased region" description="Basic and acidic residues" evidence="2">
    <location>
        <begin position="396"/>
        <end position="406"/>
    </location>
</feature>
<feature type="compositionally biased region" description="Basic and acidic residues" evidence="2">
    <location>
        <begin position="423"/>
        <end position="438"/>
    </location>
</feature>
<feature type="compositionally biased region" description="Basic and acidic residues" evidence="2">
    <location>
        <begin position="449"/>
        <end position="462"/>
    </location>
</feature>
<feature type="splice variant" id="VSP_058682" description="In isoform 2.">
    <location>
        <begin position="1"/>
        <end position="51"/>
    </location>
</feature>
<name>SGO2_ARATH</name>
<dbReference type="EMBL" id="CP002688">
    <property type="protein sequence ID" value="AED90726.1"/>
    <property type="molecule type" value="Genomic_DNA"/>
</dbReference>
<dbReference type="EMBL" id="CP002688">
    <property type="protein sequence ID" value="AED90727.1"/>
    <property type="molecule type" value="Genomic_DNA"/>
</dbReference>
<dbReference type="EMBL" id="CP002688">
    <property type="protein sequence ID" value="ANM70336.1"/>
    <property type="molecule type" value="Genomic_DNA"/>
</dbReference>
<dbReference type="EMBL" id="CP002688">
    <property type="protein sequence ID" value="ANM70337.1"/>
    <property type="molecule type" value="Genomic_DNA"/>
</dbReference>
<dbReference type="EMBL" id="AK227641">
    <property type="protein sequence ID" value="BAE99630.1"/>
    <property type="molecule type" value="mRNA"/>
</dbReference>
<dbReference type="EMBL" id="BT029735">
    <property type="protein sequence ID" value="ABM06005.1"/>
    <property type="molecule type" value="mRNA"/>
</dbReference>
<dbReference type="RefSeq" id="NP_001078526.1">
    <molecule id="Q0WTB8-1"/>
    <property type="nucleotide sequence ID" value="NM_001085057.2"/>
</dbReference>
<dbReference type="RefSeq" id="NP_001331955.1">
    <molecule id="Q0WTB8-1"/>
    <property type="nucleotide sequence ID" value="NM_001342765.1"/>
</dbReference>
<dbReference type="RefSeq" id="NP_001331956.1">
    <molecule id="Q0WTB8-1"/>
    <property type="nucleotide sequence ID" value="NM_001342764.1"/>
</dbReference>
<dbReference type="RefSeq" id="NP_196052.2">
    <molecule id="Q0WTB8-2"/>
    <property type="nucleotide sequence ID" value="NM_120514.5"/>
</dbReference>
<dbReference type="SMR" id="Q0WTB8"/>
<dbReference type="FunCoup" id="Q0WTB8">
    <property type="interactions" value="901"/>
</dbReference>
<dbReference type="IntAct" id="Q0WTB8">
    <property type="interactions" value="1"/>
</dbReference>
<dbReference type="STRING" id="3702.Q0WTB8"/>
<dbReference type="PaxDb" id="3702-AT5G04320.2"/>
<dbReference type="ProteomicsDB" id="234519">
    <molecule id="Q0WTB8-1"/>
</dbReference>
<dbReference type="EnsemblPlants" id="AT5G04320.1">
    <molecule id="Q0WTB8-2"/>
    <property type="protein sequence ID" value="AT5G04320.1"/>
    <property type="gene ID" value="AT5G04320"/>
</dbReference>
<dbReference type="EnsemblPlants" id="AT5G04320.2">
    <molecule id="Q0WTB8-1"/>
    <property type="protein sequence ID" value="AT5G04320.2"/>
    <property type="gene ID" value="AT5G04320"/>
</dbReference>
<dbReference type="EnsemblPlants" id="AT5G04320.4">
    <molecule id="Q0WTB8-1"/>
    <property type="protein sequence ID" value="AT5G04320.4"/>
    <property type="gene ID" value="AT5G04320"/>
</dbReference>
<dbReference type="EnsemblPlants" id="AT5G04320.5">
    <molecule id="Q0WTB8-1"/>
    <property type="protein sequence ID" value="AT5G04320.5"/>
    <property type="gene ID" value="AT5G04320"/>
</dbReference>
<dbReference type="GeneID" id="830311"/>
<dbReference type="Gramene" id="AT5G04320.1">
    <molecule id="Q0WTB8-2"/>
    <property type="protein sequence ID" value="AT5G04320.1"/>
    <property type="gene ID" value="AT5G04320"/>
</dbReference>
<dbReference type="Gramene" id="AT5G04320.2">
    <molecule id="Q0WTB8-1"/>
    <property type="protein sequence ID" value="AT5G04320.2"/>
    <property type="gene ID" value="AT5G04320"/>
</dbReference>
<dbReference type="Gramene" id="AT5G04320.4">
    <molecule id="Q0WTB8-1"/>
    <property type="protein sequence ID" value="AT5G04320.4"/>
    <property type="gene ID" value="AT5G04320"/>
</dbReference>
<dbReference type="Gramene" id="AT5G04320.5">
    <molecule id="Q0WTB8-1"/>
    <property type="protein sequence ID" value="AT5G04320.5"/>
    <property type="gene ID" value="AT5G04320"/>
</dbReference>
<dbReference type="KEGG" id="ath:AT5G04320"/>
<dbReference type="Araport" id="AT5G04320"/>
<dbReference type="TAIR" id="AT5G04320">
    <property type="gene designation" value="SGO2"/>
</dbReference>
<dbReference type="eggNOG" id="ENOG502RYDC">
    <property type="taxonomic scope" value="Eukaryota"/>
</dbReference>
<dbReference type="InParanoid" id="Q0WTB8"/>
<dbReference type="OMA" id="MRIDANK"/>
<dbReference type="PhylomeDB" id="Q0WTB8"/>
<dbReference type="PRO" id="PR:Q0WTB8"/>
<dbReference type="Proteomes" id="UP000006548">
    <property type="component" value="Chromosome 5"/>
</dbReference>
<dbReference type="ExpressionAtlas" id="Q0WTB8">
    <property type="expression patterns" value="baseline and differential"/>
</dbReference>
<dbReference type="GO" id="GO:0000775">
    <property type="term" value="C:chromosome, centromeric region"/>
    <property type="evidence" value="ECO:0007669"/>
    <property type="project" value="InterPro"/>
</dbReference>
<dbReference type="GO" id="GO:0005634">
    <property type="term" value="C:nucleus"/>
    <property type="evidence" value="ECO:0007669"/>
    <property type="project" value="InterPro"/>
</dbReference>
<dbReference type="GO" id="GO:0034090">
    <property type="term" value="P:maintenance of meiotic sister chromatid cohesion"/>
    <property type="evidence" value="ECO:0000316"/>
    <property type="project" value="TAIR"/>
</dbReference>
<dbReference type="GO" id="GO:0045144">
    <property type="term" value="P:meiotic sister chromatid segregation"/>
    <property type="evidence" value="ECO:0007669"/>
    <property type="project" value="InterPro"/>
</dbReference>
<dbReference type="InterPro" id="IPR044693">
    <property type="entry name" value="SGO_plant"/>
</dbReference>
<dbReference type="InterPro" id="IPR011515">
    <property type="entry name" value="Shugoshin_C"/>
</dbReference>
<dbReference type="PANTHER" id="PTHR34373">
    <property type="entry name" value="SHUGOSHIN 2"/>
    <property type="match status" value="1"/>
</dbReference>
<dbReference type="PANTHER" id="PTHR34373:SF9">
    <property type="entry name" value="SHUGOSHIN 2"/>
    <property type="match status" value="1"/>
</dbReference>
<dbReference type="Pfam" id="PF07557">
    <property type="entry name" value="Shugoshin_C"/>
    <property type="match status" value="1"/>
</dbReference>
<keyword id="KW-0025">Alternative splicing</keyword>
<keyword id="KW-0159">Chromosome partition</keyword>
<keyword id="KW-0175">Coiled coil</keyword>
<keyword id="KW-1185">Reference proteome</keyword>
<evidence type="ECO:0000255" key="1"/>
<evidence type="ECO:0000256" key="2">
    <source>
        <dbReference type="SAM" id="MobiDB-lite"/>
    </source>
</evidence>
<evidence type="ECO:0000269" key="3">
    <source>
    </source>
</evidence>
<evidence type="ECO:0000269" key="4">
    <source>
    </source>
</evidence>
<evidence type="ECO:0000269" key="5">
    <source>
    </source>
</evidence>
<evidence type="ECO:0000303" key="6">
    <source>
    </source>
</evidence>
<evidence type="ECO:0000305" key="7"/>
<evidence type="ECO:0000305" key="8">
    <source>
    </source>
</evidence>
<evidence type="ECO:0000312" key="9">
    <source>
        <dbReference type="Araport" id="AT5G04320"/>
    </source>
</evidence>
<accession>Q0WTB8</accession>
<accession>A1L4U8</accession>
<proteinExistence type="evidence at transcript level"/>
<comment type="function">
    <text evidence="3 4 5">Dispensable for both meiotic and mitotic cell cycle progression (PubMed:23884434, PubMed:24206843). Required with SGO1 for full protection of centromeric cohesion during anaphase I (PubMed:24206843). Required to prevent precocious release of pericentromeric cohesins during meiosis (PubMed:24206843). Acts redundantly to SGO1 (PubMed:24506176).</text>
</comment>
<comment type="alternative products">
    <event type="alternative splicing"/>
    <isoform>
        <id>Q0WTB8-1</id>
        <name>1</name>
        <sequence type="displayed"/>
    </isoform>
    <isoform>
        <id>Q0WTB8-2</id>
        <name>2</name>
        <sequence type="described" ref="VSP_058682"/>
    </isoform>
</comment>
<comment type="miscellaneous">
    <text evidence="8">Shugoshin is Japanese for guardian spirit.</text>
</comment>
<comment type="miscellaneous">
    <text evidence="3 4 5">Knock-down mutants show no meiotic or vegetative defects and no reduced fertility (PubMed:23884434, PubMed:24206843). Sgo1 and sgo2 double mutants are almost completely sterile and show a premature separation of sister chromatids at anaphase I (PubMed:24506176).</text>
</comment>
<comment type="similarity">
    <text evidence="7">Belongs to the shugoshin family.</text>
</comment>
<protein>
    <recommendedName>
        <fullName evidence="6">SHUGOSHIN 2</fullName>
        <shortName evidence="6">AtSGO2</shortName>
    </recommendedName>
</protein>
<sequence>MVLTEMSLDYSNRVLGSQKDNVKQMDKEETQQKENMLFSSQEYAAKLQKENMTLMKALAHRNKLVELSGIEIQKLRINLRSVQEKNLQLAQANSQMLAELNTNRDRLKDLQHELGCKNALLKVKKHLEEQVLPRTHHESKDKVSASASDGDCKSFQVHDIKHKDTKRKRTTRIKSSVSADVKPIPVNDSNSKANRKRRVSGVIDTTGIPEEICQTEDDIDKGVVSRGVNQDIDNVVNKKFVPDAANPVKESVHRKRQCTRRQSTRFDVQETKQTEKLLEMDGAKESKETASFSLRRRSARLRHEEAEPCKSLHEGDEVRETIKRRRVSLRLSARFDIQEPHVTETSNADDARSIVIEESAGSRSESVEPSESRHETKEITRKRSFSTRRQSTKGKSQTDEAIKEIATDPSLVNTIVQECDQETESKDKPKADENEGMTRRSSVGRPSRHAAEKVQSYREVSLRVKMRRKC</sequence>
<gene>
    <name evidence="6" type="primary">SGO2</name>
    <name evidence="9" type="ordered locus">At5g04320</name>
    <name evidence="7" type="ORF">T19N18.50</name>
</gene>